<keyword id="KW-0002">3D-structure</keyword>
<keyword id="KW-0025">Alternative splicing</keyword>
<keyword id="KW-1003">Cell membrane</keyword>
<keyword id="KW-1015">Disulfide bond</keyword>
<keyword id="KW-0325">Glycoprotein</keyword>
<keyword id="KW-0378">Hydrolase</keyword>
<keyword id="KW-0393">Immunoglobulin domain</keyword>
<keyword id="KW-0395">Inflammatory response</keyword>
<keyword id="KW-0472">Membrane</keyword>
<keyword id="KW-0520">NAD</keyword>
<keyword id="KW-0675">Receptor</keyword>
<keyword id="KW-1185">Reference proteome</keyword>
<keyword id="KW-0677">Repeat</keyword>
<keyword id="KW-0732">Signal</keyword>
<keyword id="KW-0812">Transmembrane</keyword>
<keyword id="KW-1133">Transmembrane helix</keyword>
<name>I18RA_HUMAN</name>
<reference key="1">
    <citation type="journal article" date="1998" name="J. Biol. Chem.">
        <title>Cloning of a novel receptor subunit, AcPL, required for interleukin-18 signaling.</title>
        <authorList>
            <person name="Born T.L."/>
            <person name="Thomassen E."/>
            <person name="Bird T.A."/>
            <person name="Sims J.E."/>
        </authorList>
    </citation>
    <scope>NUCLEOTIDE SEQUENCE [MRNA] (ISOFORM 1)</scope>
    <scope>FUNCTION</scope>
    <scope>SUBUNIT</scope>
    <scope>TISSUE SPECIFICITY</scope>
</reference>
<reference key="2">
    <citation type="journal article" date="2007" name="Cytokine">
        <title>Identification of IL-18RAP mRNA truncated splice variants in human testis and the other human tissues.</title>
        <authorList>
            <person name="Fiszer D."/>
            <person name="Rozwadowska N."/>
            <person name="Rychlewski L."/>
            <person name="Kosicki W."/>
            <person name="Kurpisz M."/>
        </authorList>
    </citation>
    <scope>NUCLEOTIDE SEQUENCE [MRNA] (ISOFORMS 3 AND 4)</scope>
    <scope>TISSUE SPECIFICITY</scope>
</reference>
<reference key="3">
    <citation type="journal article" date="2005" name="Nature">
        <title>Generation and annotation of the DNA sequences of human chromosomes 2 and 4.</title>
        <authorList>
            <person name="Hillier L.W."/>
            <person name="Graves T.A."/>
            <person name="Fulton R.S."/>
            <person name="Fulton L.A."/>
            <person name="Pepin K.H."/>
            <person name="Minx P."/>
            <person name="Wagner-McPherson C."/>
            <person name="Layman D."/>
            <person name="Wylie K."/>
            <person name="Sekhon M."/>
            <person name="Becker M.C."/>
            <person name="Fewell G.A."/>
            <person name="Delehaunty K.D."/>
            <person name="Miner T.L."/>
            <person name="Nash W.E."/>
            <person name="Kremitzki C."/>
            <person name="Oddy L."/>
            <person name="Du H."/>
            <person name="Sun H."/>
            <person name="Bradshaw-Cordum H."/>
            <person name="Ali J."/>
            <person name="Carter J."/>
            <person name="Cordes M."/>
            <person name="Harris A."/>
            <person name="Isak A."/>
            <person name="van Brunt A."/>
            <person name="Nguyen C."/>
            <person name="Du F."/>
            <person name="Courtney L."/>
            <person name="Kalicki J."/>
            <person name="Ozersky P."/>
            <person name="Abbott S."/>
            <person name="Armstrong J."/>
            <person name="Belter E.A."/>
            <person name="Caruso L."/>
            <person name="Cedroni M."/>
            <person name="Cotton M."/>
            <person name="Davidson T."/>
            <person name="Desai A."/>
            <person name="Elliott G."/>
            <person name="Erb T."/>
            <person name="Fronick C."/>
            <person name="Gaige T."/>
            <person name="Haakenson W."/>
            <person name="Haglund K."/>
            <person name="Holmes A."/>
            <person name="Harkins R."/>
            <person name="Kim K."/>
            <person name="Kruchowski S.S."/>
            <person name="Strong C.M."/>
            <person name="Grewal N."/>
            <person name="Goyea E."/>
            <person name="Hou S."/>
            <person name="Levy A."/>
            <person name="Martinka S."/>
            <person name="Mead K."/>
            <person name="McLellan M.D."/>
            <person name="Meyer R."/>
            <person name="Randall-Maher J."/>
            <person name="Tomlinson C."/>
            <person name="Dauphin-Kohlberg S."/>
            <person name="Kozlowicz-Reilly A."/>
            <person name="Shah N."/>
            <person name="Swearengen-Shahid S."/>
            <person name="Snider J."/>
            <person name="Strong J.T."/>
            <person name="Thompson J."/>
            <person name="Yoakum M."/>
            <person name="Leonard S."/>
            <person name="Pearman C."/>
            <person name="Trani L."/>
            <person name="Radionenko M."/>
            <person name="Waligorski J.E."/>
            <person name="Wang C."/>
            <person name="Rock S.M."/>
            <person name="Tin-Wollam A.-M."/>
            <person name="Maupin R."/>
            <person name="Latreille P."/>
            <person name="Wendl M.C."/>
            <person name="Yang S.-P."/>
            <person name="Pohl C."/>
            <person name="Wallis J.W."/>
            <person name="Spieth J."/>
            <person name="Bieri T.A."/>
            <person name="Berkowicz N."/>
            <person name="Nelson J.O."/>
            <person name="Osborne J."/>
            <person name="Ding L."/>
            <person name="Meyer R."/>
            <person name="Sabo A."/>
            <person name="Shotland Y."/>
            <person name="Sinha P."/>
            <person name="Wohldmann P.E."/>
            <person name="Cook L.L."/>
            <person name="Hickenbotham M.T."/>
            <person name="Eldred J."/>
            <person name="Williams D."/>
            <person name="Jones T.A."/>
            <person name="She X."/>
            <person name="Ciccarelli F.D."/>
            <person name="Izaurralde E."/>
            <person name="Taylor J."/>
            <person name="Schmutz J."/>
            <person name="Myers R.M."/>
            <person name="Cox D.R."/>
            <person name="Huang X."/>
            <person name="McPherson J.D."/>
            <person name="Mardis E.R."/>
            <person name="Clifton S.W."/>
            <person name="Warren W.C."/>
            <person name="Chinwalla A.T."/>
            <person name="Eddy S.R."/>
            <person name="Marra M.A."/>
            <person name="Ovcharenko I."/>
            <person name="Furey T.S."/>
            <person name="Miller W."/>
            <person name="Eichler E.E."/>
            <person name="Bork P."/>
            <person name="Suyama M."/>
            <person name="Torrents D."/>
            <person name="Waterston R.H."/>
            <person name="Wilson R.K."/>
        </authorList>
    </citation>
    <scope>NUCLEOTIDE SEQUENCE [LARGE SCALE GENOMIC DNA]</scope>
</reference>
<reference key="4">
    <citation type="submission" date="2005-09" db="EMBL/GenBank/DDBJ databases">
        <authorList>
            <person name="Mural R.J."/>
            <person name="Istrail S."/>
            <person name="Sutton G.G."/>
            <person name="Florea L."/>
            <person name="Halpern A.L."/>
            <person name="Mobarry C.M."/>
            <person name="Lippert R."/>
            <person name="Walenz B."/>
            <person name="Shatkay H."/>
            <person name="Dew I."/>
            <person name="Miller J.R."/>
            <person name="Flanigan M.J."/>
            <person name="Edwards N.J."/>
            <person name="Bolanos R."/>
            <person name="Fasulo D."/>
            <person name="Halldorsson B.V."/>
            <person name="Hannenhalli S."/>
            <person name="Turner R."/>
            <person name="Yooseph S."/>
            <person name="Lu F."/>
            <person name="Nusskern D.R."/>
            <person name="Shue B.C."/>
            <person name="Zheng X.H."/>
            <person name="Zhong F."/>
            <person name="Delcher A.L."/>
            <person name="Huson D.H."/>
            <person name="Kravitz S.A."/>
            <person name="Mouchard L."/>
            <person name="Reinert K."/>
            <person name="Remington K.A."/>
            <person name="Clark A.G."/>
            <person name="Waterman M.S."/>
            <person name="Eichler E.E."/>
            <person name="Adams M.D."/>
            <person name="Hunkapiller M.W."/>
            <person name="Myers E.W."/>
            <person name="Venter J.C."/>
        </authorList>
    </citation>
    <scope>NUCLEOTIDE SEQUENCE [LARGE SCALE GENOMIC DNA]</scope>
</reference>
<reference key="5">
    <citation type="submission" date="2007-10" db="EMBL/GenBank/DDBJ databases">
        <title>NEDO human cDNA sequencing project focused on splicing variants.</title>
        <authorList>
            <person name="Wakamatsu A."/>
            <person name="Yamamoto J."/>
            <person name="Kimura K."/>
            <person name="Ishii S."/>
            <person name="Watanabe K."/>
            <person name="Sugiyama A."/>
            <person name="Murakawa K."/>
            <person name="Kaida T."/>
            <person name="Tsuchiya K."/>
            <person name="Fukuzumi Y."/>
            <person name="Kumagai A."/>
            <person name="Oishi Y."/>
            <person name="Yamamoto S."/>
            <person name="Ono Y."/>
            <person name="Komori Y."/>
            <person name="Yamazaki M."/>
            <person name="Kisu Y."/>
            <person name="Nishikawa T."/>
            <person name="Sugano S."/>
            <person name="Nomura N."/>
            <person name="Isogai T."/>
        </authorList>
    </citation>
    <scope>NUCLEOTIDE SEQUENCE [LARGE SCALE MRNA] (ISOFORM 3)</scope>
</reference>
<reference key="6">
    <citation type="journal article" date="2004" name="Genome Res.">
        <title>The status, quality, and expansion of the NIH full-length cDNA project: the Mammalian Gene Collection (MGC).</title>
        <authorList>
            <consortium name="The MGC Project Team"/>
        </authorList>
    </citation>
    <scope>NUCLEOTIDE SEQUENCE [LARGE SCALE MRNA] (ISOFORMS 1 AND 2)</scope>
    <source>
        <tissue>Brain</tissue>
    </source>
</reference>
<reference key="7">
    <citation type="journal article" date="2000" name="Int. Immunol.">
        <title>IL-12 synergizes with IL-18 or IL-1beta for IFN-gamma production from human T cells.</title>
        <authorList>
            <person name="Tominaga K."/>
            <person name="Yoshimoto T."/>
            <person name="Torigoe K."/>
            <person name="Kurimoto M."/>
            <person name="Matsui K."/>
            <person name="Hada T."/>
            <person name="Okamura H."/>
            <person name="Nakanishi K."/>
        </authorList>
    </citation>
    <scope>FUNCTION</scope>
    <scope>TISSUE SPECIFICITY</scope>
</reference>
<reference key="8">
    <citation type="journal article" date="2000" name="J. Immunol.">
        <title>IFN-alpha and IL-12 induce IL-18 receptor gene expression in human NK and T cells.</title>
        <authorList>
            <person name="Sareneva T."/>
            <person name="Julkunen I."/>
            <person name="Matikainen S."/>
        </authorList>
    </citation>
    <scope>TISSUE SPECIFICITY</scope>
    <scope>INDUCTION BY IFN-ALPHA AND IL12/INTERLEUKIN-12</scope>
</reference>
<reference key="9">
    <citation type="journal article" date="2000" name="J. Immunol.">
        <title>IL-18 receptors, their role in ligand binding and function: anti-IL-1RAcPL antibody, a potent antagonist of IL-18.</title>
        <authorList>
            <person name="Debets R."/>
            <person name="Timans J.C."/>
            <person name="Churakowa T."/>
            <person name="Zurawski S."/>
            <person name="de Waal Malefyt R."/>
            <person name="Moore K.W."/>
            <person name="Abrams J.S."/>
            <person name="O'Garra A."/>
            <person name="Bazan J.F."/>
            <person name="Kastelein R.A."/>
        </authorList>
    </citation>
    <scope>TISSUE SPECIFICITY</scope>
</reference>
<reference key="10">
    <citation type="journal article" date="2003" name="Nat. Struct. Biol.">
        <title>The structure and binding mode of interleukin-18.</title>
        <authorList>
            <person name="Kato Z."/>
            <person name="Jee J."/>
            <person name="Shikano H."/>
            <person name="Mishima M."/>
            <person name="Ohki I."/>
            <person name="Ohnishi H."/>
            <person name="Li A."/>
            <person name="Hashimoto K."/>
            <person name="Matsukuma E."/>
            <person name="Omoya K."/>
            <person name="Yamamoto Y."/>
            <person name="Yoneda T."/>
            <person name="Hara T."/>
            <person name="Kondo N."/>
            <person name="Shirakawa M."/>
        </authorList>
    </citation>
    <scope>FUNCTION</scope>
    <scope>SUBUNIT</scope>
    <scope>SUBCELLULAR LOCATION</scope>
</reference>
<reference key="11">
    <citation type="journal article" date="2014" name="Nat. Commun.">
        <title>The structural basis for receptor recognition of human interleukin-18.</title>
        <authorList>
            <person name="Tsutsumi N."/>
            <person name="Kimura T."/>
            <person name="Arita K."/>
            <person name="Ariyoshi M."/>
            <person name="Ohnishi H."/>
            <person name="Yamamoto T."/>
            <person name="Zuo X."/>
            <person name="Maenaka K."/>
            <person name="Park E.Y."/>
            <person name="Kondo N."/>
            <person name="Shirakawa M."/>
            <person name="Tochio H."/>
            <person name="Kato Z."/>
        </authorList>
    </citation>
    <scope>X-RAY CRYSTALLOGRAPHY (3.10 ANGSTROMS) OF 15-356</scope>
    <scope>GLYCOSYLATION AT ASN-119; ASN-152 AND ASN-345</scope>
    <scope>DISULFIDE BONDS</scope>
    <scope>MUTAGENESIS OF LEU-167; GLU-210; TYR-212; TYR-214; LYS-313 AND 15-GLU--PRO-176</scope>
    <scope>SUBUNIT</scope>
    <scope>FUNCTION</scope>
</reference>
<sequence>MLCLGWIFLWLVAGERIKGFNISGCSTKKLLWTYSTRSEEEFVLFCDLPEPQKSHFCHRNRLSPKQVPEHLPFMGSNDLSDVQWYQQPSNGDPLEDIRKSYPHIIQDKCTLHFLTPGVNNSGSYICRPKMIKSPYDVACCVKMILEVKPQTNASCEYSASHKQDLLLGSTGSISCPSLSCQSDAQSPAVTWYKNGKLLSVERSNRIVVDEVYDYHQGTYVCDYTQSDTVSSWTVRAVVQVRTIVGDTKLKPDILDPVEDTLEVELGKPLTISCKARFGFERVFNPVIKWYIKDSDLEWEVSVPEAKSIKSTLKDEIIERNIILEKVTQRDLRRKFVCFVQNSIGNTTQSVQLKEKRGVVLLYILLGTIGTLVAVLAASALLYRHWIEIVLLYRTYQSKDQTLGDKKDFDAFVSYAKWSSFPSEATSSLSEEHLALSLFPDVLENKYGYSLCLLERDVAPGGVYAEDIVSIIKRSRRGIFILSPNYVNGPSIFELQAAVNLALDDQTLKLILIKFCYFQEPESLPHLVKKALRVLPTVTWRGLKSVPPNSRFWAKMRYHMPVKNSQGFTWNQLRITSRIFQWKGLSRTETTGRSSQPKEW</sequence>
<accession>O95256</accession>
<accession>B2RPJ3</accession>
<accession>Q2QDE5</accession>
<accession>Q3KPE7</accession>
<accession>Q3KPE8</accession>
<accession>Q53TT4</accession>
<accession>Q53TU5</accession>
<organism>
    <name type="scientific">Homo sapiens</name>
    <name type="common">Human</name>
    <dbReference type="NCBI Taxonomy" id="9606"/>
    <lineage>
        <taxon>Eukaryota</taxon>
        <taxon>Metazoa</taxon>
        <taxon>Chordata</taxon>
        <taxon>Craniata</taxon>
        <taxon>Vertebrata</taxon>
        <taxon>Euteleostomi</taxon>
        <taxon>Mammalia</taxon>
        <taxon>Eutheria</taxon>
        <taxon>Euarchontoglires</taxon>
        <taxon>Primates</taxon>
        <taxon>Haplorrhini</taxon>
        <taxon>Catarrhini</taxon>
        <taxon>Hominidae</taxon>
        <taxon>Homo</taxon>
    </lineage>
</organism>
<proteinExistence type="evidence at protein level"/>
<evidence type="ECO:0000255" key="1"/>
<evidence type="ECO:0000255" key="2">
    <source>
        <dbReference type="PROSITE-ProRule" id="PRU00114"/>
    </source>
</evidence>
<evidence type="ECO:0000255" key="3">
    <source>
        <dbReference type="PROSITE-ProRule" id="PRU00204"/>
    </source>
</evidence>
<evidence type="ECO:0000269" key="4">
    <source>
    </source>
</evidence>
<evidence type="ECO:0000269" key="5">
    <source>
    </source>
</evidence>
<evidence type="ECO:0000269" key="6">
    <source>
    </source>
</evidence>
<evidence type="ECO:0000269" key="7">
    <source>
    </source>
</evidence>
<evidence type="ECO:0000269" key="8">
    <source>
    </source>
</evidence>
<evidence type="ECO:0000269" key="9">
    <source>
    </source>
</evidence>
<evidence type="ECO:0000269" key="10">
    <source>
    </source>
</evidence>
<evidence type="ECO:0000303" key="11">
    <source>
    </source>
</evidence>
<evidence type="ECO:0000303" key="12">
    <source>
    </source>
</evidence>
<evidence type="ECO:0000303" key="13">
    <source>
    </source>
</evidence>
<evidence type="ECO:0000303" key="14">
    <source>
    </source>
</evidence>
<evidence type="ECO:0000303" key="15">
    <source>
    </source>
</evidence>
<evidence type="ECO:0000305" key="16"/>
<evidence type="ECO:0000305" key="17">
    <source>
    </source>
</evidence>
<evidence type="ECO:0000312" key="18">
    <source>
        <dbReference type="HGNC" id="HGNC:5989"/>
    </source>
</evidence>
<evidence type="ECO:0007744" key="19">
    <source>
        <dbReference type="PDB" id="3WO4"/>
    </source>
</evidence>
<evidence type="ECO:0007829" key="20">
    <source>
        <dbReference type="PDB" id="3WO4"/>
    </source>
</evidence>
<evidence type="ECO:0007829" key="21">
    <source>
        <dbReference type="PDB" id="6KN9"/>
    </source>
</evidence>
<evidence type="ECO:0007829" key="22">
    <source>
        <dbReference type="PDB" id="7FCH"/>
    </source>
</evidence>
<protein>
    <recommendedName>
        <fullName>Interleukin-18 receptor accessory protein</fullName>
        <shortName>IL-18 receptor accessory protein</shortName>
        <shortName>IL-18RAcP</shortName>
        <ecNumber evidence="3">3.2.2.6</ecNumber>
    </recommendedName>
    <alternativeName>
        <fullName>Accessory protein-like</fullName>
        <shortName>AcPL</shortName>
    </alternativeName>
    <alternativeName>
        <fullName>CD218 antigen-like family member B</fullName>
    </alternativeName>
    <alternativeName>
        <fullName>CDw218b</fullName>
    </alternativeName>
    <alternativeName>
        <fullName evidence="11">IL-1R accessory protein-like</fullName>
        <shortName>IL-1RAcPL</shortName>
    </alternativeName>
    <alternativeName>
        <fullName>Interleukin-1 receptor 7</fullName>
        <shortName>IL-1R-7</shortName>
        <shortName>IL-1R7</shortName>
    </alternativeName>
    <alternativeName>
        <fullName>Interleukin-18 receptor accessory protein-like</fullName>
    </alternativeName>
    <alternativeName>
        <fullName evidence="11 12 15">Interleukin-18 receptor beta</fullName>
        <shortName>IL-18R-beta</shortName>
        <shortName evidence="11 12 15">IL-18Rbeta</shortName>
    </alternativeName>
    <cdAntigenName>CD218b</cdAntigenName>
</protein>
<dbReference type="EC" id="3.2.2.6" evidence="3"/>
<dbReference type="EMBL" id="AF077346">
    <property type="protein sequence ID" value="AAC72196.1"/>
    <property type="molecule type" value="mRNA"/>
</dbReference>
<dbReference type="EMBL" id="DQ116957">
    <property type="protein sequence ID" value="AAZ52551.1"/>
    <property type="molecule type" value="mRNA"/>
</dbReference>
<dbReference type="EMBL" id="AC007278">
    <property type="protein sequence ID" value="AAY15080.1"/>
    <property type="molecule type" value="Genomic_DNA"/>
</dbReference>
<dbReference type="EMBL" id="AC007248">
    <property type="protein sequence ID" value="AAY15049.1"/>
    <property type="molecule type" value="Genomic_DNA"/>
</dbReference>
<dbReference type="EMBL" id="CH471127">
    <property type="protein sequence ID" value="EAX01791.1"/>
    <property type="molecule type" value="Genomic_DNA"/>
</dbReference>
<dbReference type="EMBL" id="AK300026">
    <property type="protein sequence ID" value="BAG61837.1"/>
    <property type="molecule type" value="mRNA"/>
</dbReference>
<dbReference type="EMBL" id="BC069630">
    <property type="protein sequence ID" value="AAH69630.1"/>
    <property type="molecule type" value="mRNA"/>
</dbReference>
<dbReference type="EMBL" id="BC106764">
    <property type="protein sequence ID" value="AAI06765.1"/>
    <property type="molecule type" value="mRNA"/>
</dbReference>
<dbReference type="EMBL" id="BC106765">
    <property type="protein sequence ID" value="AAI06766.1"/>
    <property type="molecule type" value="mRNA"/>
</dbReference>
<dbReference type="EMBL" id="BC137474">
    <property type="protein sequence ID" value="AAI37475.1"/>
    <property type="molecule type" value="mRNA"/>
</dbReference>
<dbReference type="EMBL" id="BC137475">
    <property type="protein sequence ID" value="AAI37476.1"/>
    <property type="molecule type" value="mRNA"/>
</dbReference>
<dbReference type="CCDS" id="CCDS2061.1">
    <molecule id="O95256-1"/>
</dbReference>
<dbReference type="CCDS" id="CCDS92824.1">
    <molecule id="O95256-2"/>
</dbReference>
<dbReference type="RefSeq" id="NP_001380415.1">
    <molecule id="O95256-1"/>
    <property type="nucleotide sequence ID" value="NM_001393486.1"/>
</dbReference>
<dbReference type="RefSeq" id="NP_001380416.1">
    <molecule id="O95256-1"/>
    <property type="nucleotide sequence ID" value="NM_001393487.1"/>
</dbReference>
<dbReference type="RefSeq" id="NP_001380417.1">
    <molecule id="O95256-2"/>
    <property type="nucleotide sequence ID" value="NM_001393488.1"/>
</dbReference>
<dbReference type="RefSeq" id="NP_001380418.1">
    <molecule id="O95256-2"/>
    <property type="nucleotide sequence ID" value="NM_001393489.1"/>
</dbReference>
<dbReference type="RefSeq" id="NP_003844.1">
    <molecule id="O95256-1"/>
    <property type="nucleotide sequence ID" value="NM_003853.4"/>
</dbReference>
<dbReference type="RefSeq" id="XP_011510389.1">
    <property type="nucleotide sequence ID" value="XM_011512087.2"/>
</dbReference>
<dbReference type="RefSeq" id="XP_011510390.1">
    <molecule id="O95256-2"/>
    <property type="nucleotide sequence ID" value="XM_011512088.3"/>
</dbReference>
<dbReference type="RefSeq" id="XP_024308965.1">
    <molecule id="O95256-1"/>
    <property type="nucleotide sequence ID" value="XM_024453197.2"/>
</dbReference>
<dbReference type="RefSeq" id="XP_024308966.1">
    <molecule id="O95256-1"/>
    <property type="nucleotide sequence ID" value="XM_024453198.2"/>
</dbReference>
<dbReference type="RefSeq" id="XP_024308967.1">
    <molecule id="O95256-1"/>
    <property type="nucleotide sequence ID" value="XM_024453199.2"/>
</dbReference>
<dbReference type="RefSeq" id="XP_024308969.1">
    <molecule id="O95256-1"/>
    <property type="nucleotide sequence ID" value="XM_024453201.2"/>
</dbReference>
<dbReference type="RefSeq" id="XP_047302118.1">
    <molecule id="O95256-2"/>
    <property type="nucleotide sequence ID" value="XM_047446162.1"/>
</dbReference>
<dbReference type="RefSeq" id="XP_054200315.1">
    <molecule id="O95256-1"/>
    <property type="nucleotide sequence ID" value="XM_054344340.1"/>
</dbReference>
<dbReference type="RefSeq" id="XP_054200316.1">
    <molecule id="O95256-1"/>
    <property type="nucleotide sequence ID" value="XM_054344341.1"/>
</dbReference>
<dbReference type="RefSeq" id="XP_054200317.1">
    <molecule id="O95256-1"/>
    <property type="nucleotide sequence ID" value="XM_054344342.1"/>
</dbReference>
<dbReference type="RefSeq" id="XP_054200318.1">
    <molecule id="O95256-1"/>
    <property type="nucleotide sequence ID" value="XM_054344343.1"/>
</dbReference>
<dbReference type="RefSeq" id="XP_054200319.1">
    <molecule id="O95256-2"/>
    <property type="nucleotide sequence ID" value="XM_054344344.1"/>
</dbReference>
<dbReference type="RefSeq" id="XP_054200320.1">
    <molecule id="O95256-2"/>
    <property type="nucleotide sequence ID" value="XM_054344345.1"/>
</dbReference>
<dbReference type="PDB" id="3WO4">
    <property type="method" value="X-ray"/>
    <property type="resolution" value="3.10 A"/>
    <property type="chains" value="C=15-356"/>
</dbReference>
<dbReference type="PDB" id="6KN9">
    <property type="method" value="X-ray"/>
    <property type="resolution" value="3.30 A"/>
    <property type="chains" value="A/B/C=20-356"/>
</dbReference>
<dbReference type="PDB" id="7FCH">
    <property type="method" value="X-ray"/>
    <property type="resolution" value="1.88 A"/>
    <property type="chains" value="A/B/C/D=406-562"/>
</dbReference>
<dbReference type="PDBsum" id="3WO4"/>
<dbReference type="PDBsum" id="6KN9"/>
<dbReference type="PDBsum" id="7FCH"/>
<dbReference type="SASBDB" id="O95256"/>
<dbReference type="SMR" id="O95256"/>
<dbReference type="BioGRID" id="114335">
    <property type="interactions" value="20"/>
</dbReference>
<dbReference type="ComplexPortal" id="CPX-10041">
    <property type="entry name" value="Interleukin-18 receptor-ligand complex"/>
</dbReference>
<dbReference type="CORUM" id="O95256"/>
<dbReference type="FunCoup" id="O95256">
    <property type="interactions" value="517"/>
</dbReference>
<dbReference type="IntAct" id="O95256">
    <property type="interactions" value="5"/>
</dbReference>
<dbReference type="STRING" id="9606.ENSP00000264260"/>
<dbReference type="ChEMBL" id="CHEMBL4804253"/>
<dbReference type="GlyCosmos" id="O95256">
    <property type="glycosylation" value="4 sites, No reported glycans"/>
</dbReference>
<dbReference type="GlyGen" id="O95256">
    <property type="glycosylation" value="4 sites"/>
</dbReference>
<dbReference type="iPTMnet" id="O95256"/>
<dbReference type="PhosphoSitePlus" id="O95256"/>
<dbReference type="BioMuta" id="IL18RAP"/>
<dbReference type="MassIVE" id="O95256"/>
<dbReference type="PaxDb" id="9606-ENSP00000264260"/>
<dbReference type="PeptideAtlas" id="O95256"/>
<dbReference type="ProteomicsDB" id="50750">
    <molecule id="O95256-1"/>
</dbReference>
<dbReference type="ProteomicsDB" id="61717"/>
<dbReference type="ABCD" id="O95256">
    <property type="antibodies" value="3 sequenced antibodies"/>
</dbReference>
<dbReference type="Antibodypedia" id="17791">
    <property type="antibodies" value="386 antibodies from 30 providers"/>
</dbReference>
<dbReference type="DNASU" id="8807"/>
<dbReference type="Ensembl" id="ENST00000264260.6">
    <molecule id="O95256-1"/>
    <property type="protein sequence ID" value="ENSP00000264260.2"/>
    <property type="gene ID" value="ENSG00000115607.10"/>
</dbReference>
<dbReference type="Ensembl" id="ENST00000409369.1">
    <molecule id="O95256-2"/>
    <property type="protein sequence ID" value="ENSP00000387201.1"/>
    <property type="gene ID" value="ENSG00000115607.10"/>
</dbReference>
<dbReference type="Ensembl" id="ENST00000687160.1">
    <molecule id="O95256-1"/>
    <property type="protein sequence ID" value="ENSP00000510345.1"/>
    <property type="gene ID" value="ENSG00000115607.10"/>
</dbReference>
<dbReference type="GeneID" id="8807"/>
<dbReference type="KEGG" id="hsa:8807"/>
<dbReference type="MANE-Select" id="ENST00000687160.1">
    <property type="protein sequence ID" value="ENSP00000510345.1"/>
    <property type="RefSeq nucleotide sequence ID" value="NM_001393487.1"/>
    <property type="RefSeq protein sequence ID" value="NP_001380416.1"/>
</dbReference>
<dbReference type="UCSC" id="uc002tbx.4">
    <molecule id="O95256-1"/>
    <property type="organism name" value="human"/>
</dbReference>
<dbReference type="AGR" id="HGNC:5989"/>
<dbReference type="CTD" id="8807"/>
<dbReference type="DisGeNET" id="8807"/>
<dbReference type="GeneCards" id="IL18RAP"/>
<dbReference type="HGNC" id="HGNC:5989">
    <property type="gene designation" value="IL18RAP"/>
</dbReference>
<dbReference type="HPA" id="ENSG00000115607">
    <property type="expression patterns" value="Group enriched (bone marrow, lymphoid tissue)"/>
</dbReference>
<dbReference type="MIM" id="604509">
    <property type="type" value="gene"/>
</dbReference>
<dbReference type="neXtProt" id="NX_O95256"/>
<dbReference type="OpenTargets" id="ENSG00000115607"/>
<dbReference type="PharmGKB" id="PA29805"/>
<dbReference type="VEuPathDB" id="HostDB:ENSG00000115607"/>
<dbReference type="eggNOG" id="ENOG502QUSU">
    <property type="taxonomic scope" value="Eukaryota"/>
</dbReference>
<dbReference type="GeneTree" id="ENSGT01090000259985"/>
<dbReference type="HOGENOM" id="CLU_025552_2_0_1"/>
<dbReference type="InParanoid" id="O95256"/>
<dbReference type="OMA" id="YPHIIQD"/>
<dbReference type="OrthoDB" id="6019866at2759"/>
<dbReference type="PAN-GO" id="O95256">
    <property type="GO annotations" value="3 GO annotations based on evolutionary models"/>
</dbReference>
<dbReference type="PhylomeDB" id="O95256"/>
<dbReference type="TreeFam" id="TF325519"/>
<dbReference type="PathwayCommons" id="O95256"/>
<dbReference type="Reactome" id="R-HSA-9012546">
    <property type="pathway name" value="Interleukin-18 signaling"/>
</dbReference>
<dbReference type="SignaLink" id="O95256"/>
<dbReference type="BioGRID-ORCS" id="8807">
    <property type="hits" value="6 hits in 1154 CRISPR screens"/>
</dbReference>
<dbReference type="EvolutionaryTrace" id="O95256"/>
<dbReference type="GeneWiki" id="IL18RAP"/>
<dbReference type="GenomeRNAi" id="8807"/>
<dbReference type="Pharos" id="O95256">
    <property type="development level" value="Tbio"/>
</dbReference>
<dbReference type="PRO" id="PR:O95256"/>
<dbReference type="Proteomes" id="UP000005640">
    <property type="component" value="Chromosome 2"/>
</dbReference>
<dbReference type="RNAct" id="O95256">
    <property type="molecule type" value="protein"/>
</dbReference>
<dbReference type="Bgee" id="ENSG00000115607">
    <property type="expression patterns" value="Expressed in granulocyte and 108 other cell types or tissues"/>
</dbReference>
<dbReference type="ExpressionAtlas" id="O95256">
    <property type="expression patterns" value="baseline and differential"/>
</dbReference>
<dbReference type="GO" id="GO:0009986">
    <property type="term" value="C:cell surface"/>
    <property type="evidence" value="ECO:0000318"/>
    <property type="project" value="GO_Central"/>
</dbReference>
<dbReference type="GO" id="GO:0045092">
    <property type="term" value="C:interleukin-18 receptor complex"/>
    <property type="evidence" value="ECO:0000314"/>
    <property type="project" value="UniProtKB"/>
</dbReference>
<dbReference type="GO" id="GO:0005886">
    <property type="term" value="C:plasma membrane"/>
    <property type="evidence" value="ECO:0000318"/>
    <property type="project" value="GO_Central"/>
</dbReference>
<dbReference type="GO" id="GO:0015026">
    <property type="term" value="F:coreceptor activity"/>
    <property type="evidence" value="ECO:0000314"/>
    <property type="project" value="UniProt"/>
</dbReference>
<dbReference type="GO" id="GO:0042008">
    <property type="term" value="F:interleukin-18 receptor activity"/>
    <property type="evidence" value="ECO:0000314"/>
    <property type="project" value="UniProtKB"/>
</dbReference>
<dbReference type="GO" id="GO:0061809">
    <property type="term" value="F:NAD+ nucleosidase activity, cyclic ADP-ribose generating"/>
    <property type="evidence" value="ECO:0007669"/>
    <property type="project" value="UniProtKB-EC"/>
</dbReference>
<dbReference type="GO" id="GO:0002250">
    <property type="term" value="P:adaptive immune response"/>
    <property type="evidence" value="ECO:0000318"/>
    <property type="project" value="GO_Central"/>
</dbReference>
<dbReference type="GO" id="GO:0008283">
    <property type="term" value="P:cell population proliferation"/>
    <property type="evidence" value="ECO:0007669"/>
    <property type="project" value="Ensembl"/>
</dbReference>
<dbReference type="GO" id="GO:0070301">
    <property type="term" value="P:cellular response to hydrogen peroxide"/>
    <property type="evidence" value="ECO:0007669"/>
    <property type="project" value="Ensembl"/>
</dbReference>
<dbReference type="GO" id="GO:0006955">
    <property type="term" value="P:immune response"/>
    <property type="evidence" value="ECO:0000304"/>
    <property type="project" value="ProtInc"/>
</dbReference>
<dbReference type="GO" id="GO:0006954">
    <property type="term" value="P:inflammatory response"/>
    <property type="evidence" value="ECO:0000304"/>
    <property type="project" value="ProtInc"/>
</dbReference>
<dbReference type="GO" id="GO:0035655">
    <property type="term" value="P:interleukin-18-mediated signaling pathway"/>
    <property type="evidence" value="ECO:0000314"/>
    <property type="project" value="UniProtKB"/>
</dbReference>
<dbReference type="GO" id="GO:0042119">
    <property type="term" value="P:neutrophil activation"/>
    <property type="evidence" value="ECO:0007669"/>
    <property type="project" value="Ensembl"/>
</dbReference>
<dbReference type="GO" id="GO:0045954">
    <property type="term" value="P:positive regulation of natural killer cell mediated cytotoxicity"/>
    <property type="evidence" value="ECO:0007669"/>
    <property type="project" value="Ensembl"/>
</dbReference>
<dbReference type="GO" id="GO:0051092">
    <property type="term" value="P:positive regulation of NF-kappaB transcription factor activity"/>
    <property type="evidence" value="ECO:0000314"/>
    <property type="project" value="UniProtKB"/>
</dbReference>
<dbReference type="FunFam" id="3.40.50.10140:FF:000002">
    <property type="entry name" value="Interleukin 1 receptor accessory protein"/>
    <property type="match status" value="1"/>
</dbReference>
<dbReference type="FunFam" id="2.60.40.10:FF:001504">
    <property type="entry name" value="Interleukin 18 receptor accessory protein"/>
    <property type="match status" value="1"/>
</dbReference>
<dbReference type="FunFam" id="2.60.40.10:FF:001761">
    <property type="entry name" value="Interleukin 18 receptor accessory protein"/>
    <property type="match status" value="1"/>
</dbReference>
<dbReference type="Gene3D" id="2.60.40.10">
    <property type="entry name" value="Immunoglobulins"/>
    <property type="match status" value="3"/>
</dbReference>
<dbReference type="Gene3D" id="3.40.50.10140">
    <property type="entry name" value="Toll/interleukin-1 receptor homology (TIR) domain"/>
    <property type="match status" value="1"/>
</dbReference>
<dbReference type="InterPro" id="IPR007110">
    <property type="entry name" value="Ig-like_dom"/>
</dbReference>
<dbReference type="InterPro" id="IPR036179">
    <property type="entry name" value="Ig-like_dom_sf"/>
</dbReference>
<dbReference type="InterPro" id="IPR013783">
    <property type="entry name" value="Ig-like_fold"/>
</dbReference>
<dbReference type="InterPro" id="IPR003599">
    <property type="entry name" value="Ig_sub"/>
</dbReference>
<dbReference type="InterPro" id="IPR015621">
    <property type="entry name" value="IL-1_rcpt_fam"/>
</dbReference>
<dbReference type="InterPro" id="IPR041416">
    <property type="entry name" value="IL-1RAcP-like_ig"/>
</dbReference>
<dbReference type="InterPro" id="IPR000157">
    <property type="entry name" value="TIR_dom"/>
</dbReference>
<dbReference type="InterPro" id="IPR035897">
    <property type="entry name" value="Toll_tir_struct_dom_sf"/>
</dbReference>
<dbReference type="PANTHER" id="PTHR11890">
    <property type="entry name" value="INTERLEUKIN-1 RECEPTOR FAMILY MEMBER"/>
    <property type="match status" value="1"/>
</dbReference>
<dbReference type="PANTHER" id="PTHR11890:SF23">
    <property type="entry name" value="INTERLEUKIN-18 RECEPTOR ACCESSORY PROTEIN"/>
    <property type="match status" value="1"/>
</dbReference>
<dbReference type="Pfam" id="PF18452">
    <property type="entry name" value="Ig_6"/>
    <property type="match status" value="1"/>
</dbReference>
<dbReference type="Pfam" id="PF01582">
    <property type="entry name" value="TIR"/>
    <property type="match status" value="1"/>
</dbReference>
<dbReference type="PRINTS" id="PR01537">
    <property type="entry name" value="INTRLKN1R1F"/>
</dbReference>
<dbReference type="SMART" id="SM00409">
    <property type="entry name" value="IG"/>
    <property type="match status" value="2"/>
</dbReference>
<dbReference type="SMART" id="SM00255">
    <property type="entry name" value="TIR"/>
    <property type="match status" value="1"/>
</dbReference>
<dbReference type="SUPFAM" id="SSF48726">
    <property type="entry name" value="Immunoglobulin"/>
    <property type="match status" value="2"/>
</dbReference>
<dbReference type="SUPFAM" id="SSF52200">
    <property type="entry name" value="Toll/Interleukin receptor TIR domain"/>
    <property type="match status" value="1"/>
</dbReference>
<dbReference type="PROSITE" id="PS50835">
    <property type="entry name" value="IG_LIKE"/>
    <property type="match status" value="2"/>
</dbReference>
<dbReference type="PROSITE" id="PS50104">
    <property type="entry name" value="TIR"/>
    <property type="match status" value="1"/>
</dbReference>
<comment type="function">
    <text evidence="7 9 10 17">Within the IL18 receptor complex, does not mediate IL18-binding, but involved in IL18-dependent signal transduction, leading to NF-kappa-B and JNK activation (PubMed:14528293, PubMed:25500532, PubMed:9792649). May play a role in IL18-mediated IFNG synthesis from T-helper 1 (Th1) cells (Probable).</text>
</comment>
<comment type="catalytic activity">
    <reaction evidence="3">
        <text>NAD(+) + H2O = ADP-D-ribose + nicotinamide + H(+)</text>
        <dbReference type="Rhea" id="RHEA:16301"/>
        <dbReference type="ChEBI" id="CHEBI:15377"/>
        <dbReference type="ChEBI" id="CHEBI:15378"/>
        <dbReference type="ChEBI" id="CHEBI:17154"/>
        <dbReference type="ChEBI" id="CHEBI:57540"/>
        <dbReference type="ChEBI" id="CHEBI:57967"/>
        <dbReference type="EC" id="3.2.2.6"/>
    </reaction>
    <physiologicalReaction direction="left-to-right" evidence="3">
        <dbReference type="Rhea" id="RHEA:16302"/>
    </physiologicalReaction>
</comment>
<comment type="subunit">
    <text evidence="7 9 16">Forms a ternary complex with IL18 and IL18R1 (PubMed:14528293, PubMed:25500532). Within this complex, IL18R1 is involved in ligand-binding and IL18RAP in signaling leading to NF-kappa-B and JNK activation (Probable).</text>
</comment>
<comment type="interaction">
    <interactant intactId="EBI-21018056">
        <id>O95256</id>
    </interactant>
    <interactant intactId="EBI-720609">
        <id>O76024</id>
        <label>WFS1</label>
    </interactant>
    <organismsDiffer>false</organismsDiffer>
    <experiments>4</experiments>
</comment>
<comment type="subcellular location">
    <subcellularLocation>
        <location evidence="7">Cell membrane</location>
        <topology evidence="16">Single-pass type I membrane protein</topology>
    </subcellularLocation>
</comment>
<comment type="alternative products">
    <event type="alternative splicing"/>
    <isoform>
        <id>O95256-1</id>
        <name>1</name>
        <sequence type="displayed"/>
    </isoform>
    <isoform>
        <id>O95256-2</id>
        <name>2</name>
        <sequence type="described" ref="VSP_056295"/>
    </isoform>
    <isoform>
        <id>O95256-3</id>
        <name>3</name>
        <name evidence="14">IL-18RAPshort</name>
        <sequence type="described" ref="VSP_059116 VSP_059117"/>
    </isoform>
    <isoform>
        <id>O95256-4</id>
        <name>4</name>
        <sequence type="described" ref="VSP_059114 VSP_059115"/>
    </isoform>
</comment>
<comment type="tissue specificity">
    <text evidence="4 5 6 8 10">Detected in adrenal gland, bone marrow, brain, fetal brain, fetal liver, heart, kidney, lung, liver, peripheral blood leukocytes, placenta, prostate, salivary gland, skeletal muscle, spinal cord, testis, thymus, thyroid, trachea and uterus (PubMed:17897836). Strongly expressed in peripheral blood leukocytes and spleen and, to a lesser extent, in colon (PubMed:9792649). Specifically coexpressed with IL18R1 in T-helper 1 (Th1)cells (PubMed:10653850, PubMed:10925275, PubMed:11046021).</text>
</comment>
<comment type="induction">
    <text evidence="5">Induced by IFN-alpha and IL12/interleukin-12 in natural killer (NK) cells and T-cells.</text>
</comment>
<comment type="domain">
    <text evidence="3">The TIR domain mediates NAD(+) hydrolase (NADase) activity. Self-association of TIR domains is required for NADase activity.</text>
</comment>
<comment type="PTM">
    <text evidence="9">N-glycosylated.</text>
</comment>
<comment type="similarity">
    <text evidence="16">Belongs to the interleukin-1 receptor family.</text>
</comment>
<feature type="signal peptide" evidence="1">
    <location>
        <begin position="1"/>
        <end position="19"/>
    </location>
</feature>
<feature type="chain" id="PRO_0000042185" description="Interleukin-18 receptor accessory protein">
    <location>
        <begin position="20"/>
        <end position="599"/>
    </location>
</feature>
<feature type="topological domain" description="Extracellular" evidence="1">
    <location>
        <begin position="20"/>
        <end position="356"/>
    </location>
</feature>
<feature type="transmembrane region" description="Helical" evidence="1">
    <location>
        <begin position="357"/>
        <end position="377"/>
    </location>
</feature>
<feature type="topological domain" description="Cytoplasmic" evidence="1">
    <location>
        <begin position="378"/>
        <end position="599"/>
    </location>
</feature>
<feature type="domain" description="Ig-like C2-type 1">
    <location>
        <begin position="149"/>
        <end position="235"/>
    </location>
</feature>
<feature type="domain" description="Ig-like C2-type 2">
    <location>
        <begin position="251"/>
        <end position="353"/>
    </location>
</feature>
<feature type="domain" description="TIR" evidence="3">
    <location>
        <begin position="406"/>
        <end position="559"/>
    </location>
</feature>
<feature type="active site" evidence="3">
    <location>
        <position position="493"/>
    </location>
</feature>
<feature type="glycosylation site" description="N-linked (GlcNAc...) asparagine" evidence="1">
    <location>
        <position position="21"/>
    </location>
</feature>
<feature type="glycosylation site" description="N-linked (GlcNAc...) asparagine" evidence="9 19">
    <location>
        <position position="119"/>
    </location>
</feature>
<feature type="glycosylation site" description="N-linked (GlcNAc...) asparagine" evidence="9 19">
    <location>
        <position position="152"/>
    </location>
</feature>
<feature type="glycosylation site" description="N-linked (GlcNAc...) asparagine" evidence="9 19">
    <location>
        <position position="345"/>
    </location>
</feature>
<feature type="disulfide bond" evidence="9 19">
    <location>
        <begin position="46"/>
        <end position="126"/>
    </location>
</feature>
<feature type="disulfide bond" evidence="9 19">
    <location>
        <begin position="155"/>
        <end position="180"/>
    </location>
</feature>
<feature type="disulfide bond" evidence="9 19">
    <location>
        <begin position="175"/>
        <end position="221"/>
    </location>
</feature>
<feature type="disulfide bond" evidence="2">
    <location>
        <begin position="180"/>
        <end position="221"/>
    </location>
</feature>
<feature type="disulfide bond" evidence="2 9 19">
    <location>
        <begin position="273"/>
        <end position="337"/>
    </location>
</feature>
<feature type="splice variant" id="VSP_056295" description="In isoform 2." evidence="13">
    <location>
        <begin position="1"/>
        <end position="142"/>
    </location>
</feature>
<feature type="splice variant" id="VSP_059114" description="In isoform 4." evidence="8">
    <original>VNNSGSYIC</original>
    <variation>LGHIFVDPR</variation>
    <location>
        <begin position="118"/>
        <end position="126"/>
    </location>
</feature>
<feature type="splice variant" id="VSP_059115" description="In isoform 4." evidence="8">
    <location>
        <begin position="127"/>
        <end position="599"/>
    </location>
</feature>
<feature type="splice variant" id="VSP_059116" description="In isoform 3." evidence="8">
    <original>SPYDVACCVKMILEVKP</original>
    <variation>YDPNTFLSENISKSSII</variation>
    <location>
        <begin position="133"/>
        <end position="149"/>
    </location>
</feature>
<feature type="splice variant" id="VSP_059117" description="In isoform 3." evidence="8">
    <location>
        <begin position="150"/>
        <end position="599"/>
    </location>
</feature>
<feature type="sequence variant" id="VAR_034005" description="In dbSNP:rs11465716.">
    <original>V</original>
    <variation>I</variation>
    <location>
        <position position="350"/>
    </location>
</feature>
<feature type="mutagenesis site" description="Impairs IL18 receptor signaling via NF-kappa-B." evidence="9">
    <location>
        <begin position="15"/>
        <end position="176"/>
    </location>
</feature>
<feature type="mutagenesis site" description="Decreases binding to the preformed binary complex of IL18 and IL18R1." evidence="9">
    <original>L</original>
    <variation>A</variation>
    <location>
        <position position="167"/>
    </location>
</feature>
<feature type="mutagenesis site" description="Decreases binding to the preformed binary complex of IL18 and IL18R1. Impairs IL18 receptor signaling via NF-kappa-B; when associated with A-212 and A-214." evidence="9">
    <original>E</original>
    <variation>A</variation>
    <location>
        <position position="210"/>
    </location>
</feature>
<feature type="mutagenesis site" description="Abolishes binding to the preformed binary complex of IL18 and IL18R1. Impairs IL18 receptor signaling via NF-kappa-B; when associated with A-210 and A-214." evidence="9">
    <original>Y</original>
    <variation>A</variation>
    <location>
        <position position="212"/>
    </location>
</feature>
<feature type="mutagenesis site" description="Decreases binding to the preformed binary complex of IL18 and IL18R1. Impairs IL18 receptor signaling via NF-kappa-B; when associated with A-210 and A-212." evidence="9">
    <original>Y</original>
    <variation>A</variation>
    <location>
        <position position="214"/>
    </location>
</feature>
<feature type="mutagenesis site" description="Decreases binding to the preformed binary complex of IL18 and IL18R1. Decreases IL18 receptor signaling via NF-kappa-B." evidence="9">
    <original>K</original>
    <variation>A</variation>
    <location>
        <position position="313"/>
    </location>
</feature>
<feature type="strand" evidence="20">
    <location>
        <begin position="32"/>
        <end position="36"/>
    </location>
</feature>
<feature type="strand" evidence="20">
    <location>
        <begin position="41"/>
        <end position="44"/>
    </location>
</feature>
<feature type="strand" evidence="20">
    <location>
        <begin position="110"/>
        <end position="115"/>
    </location>
</feature>
<feature type="strand" evidence="20">
    <location>
        <begin position="117"/>
        <end position="120"/>
    </location>
</feature>
<feature type="strand" evidence="20">
    <location>
        <begin position="122"/>
        <end position="126"/>
    </location>
</feature>
<feature type="strand" evidence="20">
    <location>
        <begin position="141"/>
        <end position="149"/>
    </location>
</feature>
<feature type="strand" evidence="20">
    <location>
        <begin position="154"/>
        <end position="157"/>
    </location>
</feature>
<feature type="strand" evidence="20">
    <location>
        <begin position="161"/>
        <end position="166"/>
    </location>
</feature>
<feature type="strand" evidence="20">
    <location>
        <begin position="171"/>
        <end position="174"/>
    </location>
</feature>
<feature type="helix" evidence="20">
    <location>
        <begin position="176"/>
        <end position="178"/>
    </location>
</feature>
<feature type="turn" evidence="20">
    <location>
        <begin position="180"/>
        <end position="183"/>
    </location>
</feature>
<feature type="strand" evidence="20">
    <location>
        <begin position="189"/>
        <end position="193"/>
    </location>
</feature>
<feature type="strand" evidence="21">
    <location>
        <begin position="196"/>
        <end position="199"/>
    </location>
</feature>
<feature type="strand" evidence="20">
    <location>
        <begin position="203"/>
        <end position="210"/>
    </location>
</feature>
<feature type="helix" evidence="20">
    <location>
        <begin position="213"/>
        <end position="215"/>
    </location>
</feature>
<feature type="strand" evidence="20">
    <location>
        <begin position="217"/>
        <end position="224"/>
    </location>
</feature>
<feature type="strand" evidence="20">
    <location>
        <begin position="233"/>
        <end position="243"/>
    </location>
</feature>
<feature type="strand" evidence="20">
    <location>
        <begin position="252"/>
        <end position="255"/>
    </location>
</feature>
<feature type="strand" evidence="20">
    <location>
        <begin position="258"/>
        <end position="263"/>
    </location>
</feature>
<feature type="strand" evidence="20">
    <location>
        <begin position="269"/>
        <end position="278"/>
    </location>
</feature>
<feature type="strand" evidence="20">
    <location>
        <begin position="286"/>
        <end position="293"/>
    </location>
</feature>
<feature type="strand" evidence="20">
    <location>
        <begin position="296"/>
        <end position="299"/>
    </location>
</feature>
<feature type="strand" evidence="20">
    <location>
        <begin position="306"/>
        <end position="310"/>
    </location>
</feature>
<feature type="strand" evidence="20">
    <location>
        <begin position="312"/>
        <end position="325"/>
    </location>
</feature>
<feature type="helix" evidence="20">
    <location>
        <begin position="328"/>
        <end position="331"/>
    </location>
</feature>
<feature type="strand" evidence="20">
    <location>
        <begin position="333"/>
        <end position="341"/>
    </location>
</feature>
<feature type="strand" evidence="20">
    <location>
        <begin position="344"/>
        <end position="354"/>
    </location>
</feature>
<feature type="strand" evidence="22">
    <location>
        <begin position="408"/>
        <end position="413"/>
    </location>
</feature>
<feature type="helix" evidence="22">
    <location>
        <begin position="430"/>
        <end position="435"/>
    </location>
</feature>
<feature type="helix" evidence="22">
    <location>
        <begin position="437"/>
        <end position="442"/>
    </location>
</feature>
<feature type="turn" evidence="22">
    <location>
        <begin position="443"/>
        <end position="446"/>
    </location>
</feature>
<feature type="helix" evidence="22">
    <location>
        <begin position="453"/>
        <end position="456"/>
    </location>
</feature>
<feature type="strand" evidence="22">
    <location>
        <begin position="459"/>
        <end position="461"/>
    </location>
</feature>
<feature type="helix" evidence="22">
    <location>
        <begin position="463"/>
        <end position="472"/>
    </location>
</feature>
<feature type="strand" evidence="22">
    <location>
        <begin position="474"/>
        <end position="481"/>
    </location>
</feature>
<feature type="helix" evidence="22">
    <location>
        <begin position="483"/>
        <end position="486"/>
    </location>
</feature>
<feature type="helix" evidence="22">
    <location>
        <begin position="491"/>
        <end position="501"/>
    </location>
</feature>
<feature type="strand" evidence="22">
    <location>
        <begin position="508"/>
        <end position="513"/>
    </location>
</feature>
<feature type="helix" evidence="22">
    <location>
        <begin position="525"/>
        <end position="533"/>
    </location>
</feature>
<feature type="strand" evidence="22">
    <location>
        <begin position="536"/>
        <end position="538"/>
    </location>
</feature>
<feature type="turn" evidence="22">
    <location>
        <begin position="541"/>
        <end position="544"/>
    </location>
</feature>
<feature type="helix" evidence="22">
    <location>
        <begin position="550"/>
        <end position="558"/>
    </location>
</feature>
<gene>
    <name evidence="18" type="primary">IL18RAP</name>
    <name type="synonym">IL1R7</name>
</gene>